<keyword id="KW-0025">Alternative splicing</keyword>
<keyword id="KW-0963">Cytoplasm</keyword>
<keyword id="KW-0238">DNA-binding</keyword>
<keyword id="KW-0479">Metal-binding</keyword>
<keyword id="KW-0539">Nucleus</keyword>
<keyword id="KW-1267">Proteomics identification</keyword>
<keyword id="KW-1185">Reference proteome</keyword>
<keyword id="KW-0677">Repeat</keyword>
<keyword id="KW-0804">Transcription</keyword>
<keyword id="KW-0805">Transcription regulation</keyword>
<keyword id="KW-0862">Zinc</keyword>
<keyword id="KW-0863">Zinc-finger</keyword>
<protein>
    <recommendedName>
        <fullName>Zinc finger protein 415</fullName>
    </recommendedName>
</protein>
<feature type="chain" id="PRO_0000286808" description="Zinc finger protein 415">
    <location>
        <begin position="1"/>
        <end position="603"/>
    </location>
</feature>
<feature type="zinc finger region" description="C2H2-type 1; degenerate" evidence="1">
    <location>
        <begin position="264"/>
        <end position="286"/>
    </location>
</feature>
<feature type="zinc finger region" description="C2H2-type 2" evidence="1">
    <location>
        <begin position="292"/>
        <end position="314"/>
    </location>
</feature>
<feature type="zinc finger region" description="C2H2-type 3" evidence="1">
    <location>
        <begin position="320"/>
        <end position="342"/>
    </location>
</feature>
<feature type="zinc finger region" description="C2H2-type 4" evidence="1">
    <location>
        <begin position="348"/>
        <end position="370"/>
    </location>
</feature>
<feature type="zinc finger region" description="C2H2-type 5" evidence="1">
    <location>
        <begin position="376"/>
        <end position="398"/>
    </location>
</feature>
<feature type="zinc finger region" description="C2H2-type 6" evidence="1">
    <location>
        <begin position="404"/>
        <end position="426"/>
    </location>
</feature>
<feature type="zinc finger region" description="C2H2-type 7" evidence="1">
    <location>
        <begin position="432"/>
        <end position="454"/>
    </location>
</feature>
<feature type="zinc finger region" description="C2H2-type 8" evidence="1">
    <location>
        <begin position="460"/>
        <end position="482"/>
    </location>
</feature>
<feature type="zinc finger region" description="C2H2-type 9" evidence="1">
    <location>
        <begin position="488"/>
        <end position="510"/>
    </location>
</feature>
<feature type="zinc finger region" description="C2H2-type 10" evidence="1">
    <location>
        <begin position="516"/>
        <end position="538"/>
    </location>
</feature>
<feature type="zinc finger region" description="C2H2-type 11" evidence="1">
    <location>
        <begin position="544"/>
        <end position="566"/>
    </location>
</feature>
<feature type="zinc finger region" description="C2H2-type 12" evidence="1">
    <location>
        <begin position="572"/>
        <end position="594"/>
    </location>
</feature>
<feature type="splice variant" id="VSP_025175" description="In isoform 3." evidence="7">
    <location>
        <begin position="1"/>
        <end position="278"/>
    </location>
</feature>
<feature type="splice variant" id="VSP_025176" description="In isoform 5." evidence="5 7">
    <original>MPELYTEDFIQGCDVGELQEPGLPGVLSYVGAQERALDHRKPSTSSKKTKRVEIDQRCENRLECNGAISAHCNLRLPDSNDSPASASRVAGIT</original>
    <variation>MAFTQLTFRDVAIEFSQDEWKCLNSTQRTLYRDVMLENYRNLVSL</variation>
    <location>
        <begin position="1"/>
        <end position="93"/>
    </location>
</feature>
<feature type="splice variant" id="VSP_044807" description="In isoform 6." evidence="5">
    <original>MPELYTEDFIQGCDVGELQEPGLPGVLSYVGAQERALDHRKPSTSSKKTKRVEIDQRCENRLECNGAISAHCNLRLPDSNDSPASASRVAGIT</original>
    <variation>MDGDGLTFRDVAIEFSQDEWKCLNSTQRTLYRDVMLENYRNLVSL</variation>
    <location>
        <begin position="1"/>
        <end position="93"/>
    </location>
</feature>
<feature type="splice variant" id="VSP_025177" description="In isoform 4." evidence="6 7">
    <original>MPELYTEDFIQGCDVGELQEPGLPGVLSYVGAQERALDHRKPSTSSKKTKRVEIDQRCENRLECNGAISAHCNLRLPDSNDSPASASRVAGI</original>
    <variation>MWEHRKEPWTIESQVRVARKPKGWEWIKGVK</variation>
    <location>
        <begin position="1"/>
        <end position="92"/>
    </location>
</feature>
<feature type="splice variant" id="VSP_025178" description="In isoform 2." evidence="7">
    <location>
        <begin position="26"/>
        <end position="61"/>
    </location>
</feature>
<feature type="sequence variant" id="VAR_032166" description="In dbSNP:rs16984466.">
    <original>H</original>
    <variation>P</variation>
    <location>
        <position position="196"/>
    </location>
</feature>
<feature type="sequence variant" id="VAR_032167" description="In dbSNP:rs1054485." evidence="2 4">
    <original>I</original>
    <variation>L</variation>
    <location>
        <position position="229"/>
    </location>
</feature>
<feature type="sequence variant" id="VAR_032168" description="In dbSNP:rs1133327." evidence="2 4">
    <original>I</original>
    <variation>V</variation>
    <location>
        <position position="233"/>
    </location>
</feature>
<feature type="sequence variant" id="VAR_032169" description="In dbSNP:rs1560099.">
    <original>Y</original>
    <variation>C</variation>
    <location>
        <position position="241"/>
    </location>
</feature>
<feature type="sequence variant" id="VAR_032170" description="In dbSNP:rs10410030." evidence="3">
    <original>N</original>
    <variation>D</variation>
    <location>
        <position position="463"/>
    </location>
</feature>
<reference key="1">
    <citation type="journal article" date="2006" name="Biochem. Biophys. Res. Commun.">
        <title>A novel human gene ZNF415 with five isoforms inhibits AP-1- and p53-mediated transcriptional activity.</title>
        <authorList>
            <person name="Cheng Y."/>
            <person name="Wang Y."/>
            <person name="Li Y."/>
            <person name="Deng Y."/>
            <person name="Hu J."/>
            <person name="Mo X."/>
            <person name="Li N."/>
            <person name="Li Y."/>
            <person name="Luo N."/>
            <person name="Yuan W."/>
            <person name="Xiao J."/>
            <person name="Zhu C."/>
            <person name="Wu X."/>
            <person name="Liu M."/>
        </authorList>
    </citation>
    <scope>NUCLEOTIDE SEQUENCE [MRNA] (ISOFORMS 1; 2; 3; 4 AND 5)</scope>
    <scope>FUNCTION</scope>
    <scope>SUBCELLULAR LOCATION</scope>
    <scope>ALTERNATIVE SPLICING</scope>
    <scope>TISSUE SPECIFICITY</scope>
    <scope>VARIANTS LEU-229 AND VAL-233</scope>
    <source>
        <tissue>Fetal heart</tissue>
    </source>
</reference>
<reference key="2">
    <citation type="journal article" date="2004" name="Nat. Genet.">
        <title>Complete sequencing and characterization of 21,243 full-length human cDNAs.</title>
        <authorList>
            <person name="Ota T."/>
            <person name="Suzuki Y."/>
            <person name="Nishikawa T."/>
            <person name="Otsuki T."/>
            <person name="Sugiyama T."/>
            <person name="Irie R."/>
            <person name="Wakamatsu A."/>
            <person name="Hayashi K."/>
            <person name="Sato H."/>
            <person name="Nagai K."/>
            <person name="Kimura K."/>
            <person name="Makita H."/>
            <person name="Sekine M."/>
            <person name="Obayashi M."/>
            <person name="Nishi T."/>
            <person name="Shibahara T."/>
            <person name="Tanaka T."/>
            <person name="Ishii S."/>
            <person name="Yamamoto J."/>
            <person name="Saito K."/>
            <person name="Kawai Y."/>
            <person name="Isono Y."/>
            <person name="Nakamura Y."/>
            <person name="Nagahari K."/>
            <person name="Murakami K."/>
            <person name="Yasuda T."/>
            <person name="Iwayanagi T."/>
            <person name="Wagatsuma M."/>
            <person name="Shiratori A."/>
            <person name="Sudo H."/>
            <person name="Hosoiri T."/>
            <person name="Kaku Y."/>
            <person name="Kodaira H."/>
            <person name="Kondo H."/>
            <person name="Sugawara M."/>
            <person name="Takahashi M."/>
            <person name="Kanda K."/>
            <person name="Yokoi T."/>
            <person name="Furuya T."/>
            <person name="Kikkawa E."/>
            <person name="Omura Y."/>
            <person name="Abe K."/>
            <person name="Kamihara K."/>
            <person name="Katsuta N."/>
            <person name="Sato K."/>
            <person name="Tanikawa M."/>
            <person name="Yamazaki M."/>
            <person name="Ninomiya K."/>
            <person name="Ishibashi T."/>
            <person name="Yamashita H."/>
            <person name="Murakawa K."/>
            <person name="Fujimori K."/>
            <person name="Tanai H."/>
            <person name="Kimata M."/>
            <person name="Watanabe M."/>
            <person name="Hiraoka S."/>
            <person name="Chiba Y."/>
            <person name="Ishida S."/>
            <person name="Ono Y."/>
            <person name="Takiguchi S."/>
            <person name="Watanabe S."/>
            <person name="Yosida M."/>
            <person name="Hotuta T."/>
            <person name="Kusano J."/>
            <person name="Kanehori K."/>
            <person name="Takahashi-Fujii A."/>
            <person name="Hara H."/>
            <person name="Tanase T.-O."/>
            <person name="Nomura Y."/>
            <person name="Togiya S."/>
            <person name="Komai F."/>
            <person name="Hara R."/>
            <person name="Takeuchi K."/>
            <person name="Arita M."/>
            <person name="Imose N."/>
            <person name="Musashino K."/>
            <person name="Yuuki H."/>
            <person name="Oshima A."/>
            <person name="Sasaki N."/>
            <person name="Aotsuka S."/>
            <person name="Yoshikawa Y."/>
            <person name="Matsunawa H."/>
            <person name="Ichihara T."/>
            <person name="Shiohata N."/>
            <person name="Sano S."/>
            <person name="Moriya S."/>
            <person name="Momiyama H."/>
            <person name="Satoh N."/>
            <person name="Takami S."/>
            <person name="Terashima Y."/>
            <person name="Suzuki O."/>
            <person name="Nakagawa S."/>
            <person name="Senoh A."/>
            <person name="Mizoguchi H."/>
            <person name="Goto Y."/>
            <person name="Shimizu F."/>
            <person name="Wakebe H."/>
            <person name="Hishigaki H."/>
            <person name="Watanabe T."/>
            <person name="Sugiyama A."/>
            <person name="Takemoto M."/>
            <person name="Kawakami B."/>
            <person name="Yamazaki M."/>
            <person name="Watanabe K."/>
            <person name="Kumagai A."/>
            <person name="Itakura S."/>
            <person name="Fukuzumi Y."/>
            <person name="Fujimori Y."/>
            <person name="Komiyama M."/>
            <person name="Tashiro H."/>
            <person name="Tanigami A."/>
            <person name="Fujiwara T."/>
            <person name="Ono T."/>
            <person name="Yamada K."/>
            <person name="Fujii Y."/>
            <person name="Ozaki K."/>
            <person name="Hirao M."/>
            <person name="Ohmori Y."/>
            <person name="Kawabata A."/>
            <person name="Hikiji T."/>
            <person name="Kobatake N."/>
            <person name="Inagaki H."/>
            <person name="Ikema Y."/>
            <person name="Okamoto S."/>
            <person name="Okitani R."/>
            <person name="Kawakami T."/>
            <person name="Noguchi S."/>
            <person name="Itoh T."/>
            <person name="Shigeta K."/>
            <person name="Senba T."/>
            <person name="Matsumura K."/>
            <person name="Nakajima Y."/>
            <person name="Mizuno T."/>
            <person name="Morinaga M."/>
            <person name="Sasaki M."/>
            <person name="Togashi T."/>
            <person name="Oyama M."/>
            <person name="Hata H."/>
            <person name="Watanabe M."/>
            <person name="Komatsu T."/>
            <person name="Mizushima-Sugano J."/>
            <person name="Satoh T."/>
            <person name="Shirai Y."/>
            <person name="Takahashi Y."/>
            <person name="Nakagawa K."/>
            <person name="Okumura K."/>
            <person name="Nagase T."/>
            <person name="Nomura N."/>
            <person name="Kikuchi H."/>
            <person name="Masuho Y."/>
            <person name="Yamashita R."/>
            <person name="Nakai K."/>
            <person name="Yada T."/>
            <person name="Nakamura Y."/>
            <person name="Ohara O."/>
            <person name="Isogai T."/>
            <person name="Sugano S."/>
        </authorList>
    </citation>
    <scope>NUCLEOTIDE SEQUENCE [LARGE SCALE MRNA] (ISOFORM 5)</scope>
    <scope>NUCLEOTIDE SEQUENCE [LARGE SCALE MRNA] OF 1-72 (ISOFORM 6)</scope>
    <scope>VARIANTS LEU-229 AND VAL-233</scope>
    <source>
        <tissue>Brain</tissue>
        <tissue>Placenta</tissue>
        <tissue>Testis</tissue>
    </source>
</reference>
<reference key="3">
    <citation type="journal article" date="2004" name="Nature">
        <title>The DNA sequence and biology of human chromosome 19.</title>
        <authorList>
            <person name="Grimwood J."/>
            <person name="Gordon L.A."/>
            <person name="Olsen A.S."/>
            <person name="Terry A."/>
            <person name="Schmutz J."/>
            <person name="Lamerdin J.E."/>
            <person name="Hellsten U."/>
            <person name="Goodstein D."/>
            <person name="Couronne O."/>
            <person name="Tran-Gyamfi M."/>
            <person name="Aerts A."/>
            <person name="Altherr M."/>
            <person name="Ashworth L."/>
            <person name="Bajorek E."/>
            <person name="Black S."/>
            <person name="Branscomb E."/>
            <person name="Caenepeel S."/>
            <person name="Carrano A.V."/>
            <person name="Caoile C."/>
            <person name="Chan Y.M."/>
            <person name="Christensen M."/>
            <person name="Cleland C.A."/>
            <person name="Copeland A."/>
            <person name="Dalin E."/>
            <person name="Dehal P."/>
            <person name="Denys M."/>
            <person name="Detter J.C."/>
            <person name="Escobar J."/>
            <person name="Flowers D."/>
            <person name="Fotopulos D."/>
            <person name="Garcia C."/>
            <person name="Georgescu A.M."/>
            <person name="Glavina T."/>
            <person name="Gomez M."/>
            <person name="Gonzales E."/>
            <person name="Groza M."/>
            <person name="Hammon N."/>
            <person name="Hawkins T."/>
            <person name="Haydu L."/>
            <person name="Ho I."/>
            <person name="Huang W."/>
            <person name="Israni S."/>
            <person name="Jett J."/>
            <person name="Kadner K."/>
            <person name="Kimball H."/>
            <person name="Kobayashi A."/>
            <person name="Larionov V."/>
            <person name="Leem S.-H."/>
            <person name="Lopez F."/>
            <person name="Lou Y."/>
            <person name="Lowry S."/>
            <person name="Malfatti S."/>
            <person name="Martinez D."/>
            <person name="McCready P.M."/>
            <person name="Medina C."/>
            <person name="Morgan J."/>
            <person name="Nelson K."/>
            <person name="Nolan M."/>
            <person name="Ovcharenko I."/>
            <person name="Pitluck S."/>
            <person name="Pollard M."/>
            <person name="Popkie A.P."/>
            <person name="Predki P."/>
            <person name="Quan G."/>
            <person name="Ramirez L."/>
            <person name="Rash S."/>
            <person name="Retterer J."/>
            <person name="Rodriguez A."/>
            <person name="Rogers S."/>
            <person name="Salamov A."/>
            <person name="Salazar A."/>
            <person name="She X."/>
            <person name="Smith D."/>
            <person name="Slezak T."/>
            <person name="Solovyev V."/>
            <person name="Thayer N."/>
            <person name="Tice H."/>
            <person name="Tsai M."/>
            <person name="Ustaszewska A."/>
            <person name="Vo N."/>
            <person name="Wagner M."/>
            <person name="Wheeler J."/>
            <person name="Wu K."/>
            <person name="Xie G."/>
            <person name="Yang J."/>
            <person name="Dubchak I."/>
            <person name="Furey T.S."/>
            <person name="DeJong P."/>
            <person name="Dickson M."/>
            <person name="Gordon D."/>
            <person name="Eichler E.E."/>
            <person name="Pennacchio L.A."/>
            <person name="Richardson P."/>
            <person name="Stubbs L."/>
            <person name="Rokhsar D.S."/>
            <person name="Myers R.M."/>
            <person name="Rubin E.M."/>
            <person name="Lucas S.M."/>
        </authorList>
    </citation>
    <scope>NUCLEOTIDE SEQUENCE [LARGE SCALE GENOMIC DNA]</scope>
</reference>
<reference key="4">
    <citation type="journal article" date="2004" name="Genome Res.">
        <title>The status, quality, and expansion of the NIH full-length cDNA project: the Mammalian Gene Collection (MGC).</title>
        <authorList>
            <consortium name="The MGC Project Team"/>
        </authorList>
    </citation>
    <scope>NUCLEOTIDE SEQUENCE [LARGE SCALE MRNA] (ISOFORM 4)</scope>
    <scope>VARIANT ASP-463</scope>
</reference>
<evidence type="ECO:0000255" key="1">
    <source>
        <dbReference type="PROSITE-ProRule" id="PRU00042"/>
    </source>
</evidence>
<evidence type="ECO:0000269" key="2">
    <source>
    </source>
</evidence>
<evidence type="ECO:0000269" key="3">
    <source>
    </source>
</evidence>
<evidence type="ECO:0000269" key="4">
    <source>
    </source>
</evidence>
<evidence type="ECO:0000303" key="5">
    <source>
    </source>
</evidence>
<evidence type="ECO:0000303" key="6">
    <source>
    </source>
</evidence>
<evidence type="ECO:0000303" key="7">
    <source>
    </source>
</evidence>
<name>ZN415_HUMAN</name>
<proteinExistence type="evidence at protein level"/>
<accession>Q09FC8</accession>
<accession>F5H287</accession>
<accession>Q09FC7</accession>
<accession>Q09FC9</accession>
<accession>Q09FD0</accession>
<accession>Q6NSZ2</accession>
<accession>Q6P3S0</accession>
<accession>Q9NUR2</accession>
<sequence length="603" mass="68798">MPELYTEDFIQGCDVGELQEPGLPGVLSYVGAQERALDHRKPSTSSKKTKRVEIDQRCENRLECNGAISAHCNLRLPDSNDSPASASRVAGITDLSRNCVIKELAPQQEGNPGEVFHTVTLEQHEKHDIEEFCFREIKKKIHDFDCQWRDDERNCNKVTTAPKENLTCRRDQRDRRGIGNKSIKHQLGLSFLPHPHELQQFQAEGKIYECNHVEKSVNHGSSVSPPQIISSTIKTHVSNKYGTDFICSSLLTQEQKSCIREKPYRYIECDKALNHGSHMTVRQVSHSGEKGYKCDLCGKVFSQKSNLARHWRVHTGEKPYKCNECDRSFSRNSCLALHRRVHTGEKPYKCYECDKVFSRNSCLALHQKTHIGEKPYTCKECGKAFSVRSTLTNHQVIHSGKKPYKCNECGKVFSQTSSLATHQRIHTGEKPYKCNECGKVFSQTSSLARHWRIHTGEKPYKCNECGKVFSYNSHLASHRRVHTGEKPYKCNECGKAFSVHSNLTTHQVIHTGEKPYKCNQCGKGFSVHSSLTTHQVIHTGEKPYKCNECGKSFSVRPNLTRHQIIHTGKKPYKCSDCGKSFSVRPNLFRHQIIHTKEKPYKRN</sequence>
<gene>
    <name type="primary">ZNF415</name>
</gene>
<organism>
    <name type="scientific">Homo sapiens</name>
    <name type="common">Human</name>
    <dbReference type="NCBI Taxonomy" id="9606"/>
    <lineage>
        <taxon>Eukaryota</taxon>
        <taxon>Metazoa</taxon>
        <taxon>Chordata</taxon>
        <taxon>Craniata</taxon>
        <taxon>Vertebrata</taxon>
        <taxon>Euteleostomi</taxon>
        <taxon>Mammalia</taxon>
        <taxon>Eutheria</taxon>
        <taxon>Euarchontoglires</taxon>
        <taxon>Primates</taxon>
        <taxon>Haplorrhini</taxon>
        <taxon>Catarrhini</taxon>
        <taxon>Hominidae</taxon>
        <taxon>Homo</taxon>
    </lineage>
</organism>
<dbReference type="EMBL" id="DQ925697">
    <property type="protein sequence ID" value="ABI51311.1"/>
    <property type="molecule type" value="mRNA"/>
</dbReference>
<dbReference type="EMBL" id="DQ925696">
    <property type="protein sequence ID" value="ABI51310.1"/>
    <property type="molecule type" value="mRNA"/>
</dbReference>
<dbReference type="EMBL" id="DQ925698">
    <property type="protein sequence ID" value="ABI51312.1"/>
    <property type="molecule type" value="mRNA"/>
</dbReference>
<dbReference type="EMBL" id="DQ925695">
    <property type="protein sequence ID" value="ABI51309.1"/>
    <property type="molecule type" value="mRNA"/>
</dbReference>
<dbReference type="EMBL" id="AY283600">
    <property type="protein sequence ID" value="AAP35086.1"/>
    <property type="molecule type" value="mRNA"/>
</dbReference>
<dbReference type="EMBL" id="AK002053">
    <property type="protein sequence ID" value="BAA92059.1"/>
    <property type="molecule type" value="mRNA"/>
</dbReference>
<dbReference type="EMBL" id="DA518713">
    <property type="status" value="NOT_ANNOTATED_CDS"/>
    <property type="molecule type" value="mRNA"/>
</dbReference>
<dbReference type="EMBL" id="AC010328">
    <property type="status" value="NOT_ANNOTATED_CDS"/>
    <property type="molecule type" value="Genomic_DNA"/>
</dbReference>
<dbReference type="EMBL" id="BC069668">
    <property type="protein sequence ID" value="AAH69668.1"/>
    <property type="molecule type" value="mRNA"/>
</dbReference>
<dbReference type="EMBL" id="BC063880">
    <property type="protein sequence ID" value="AAH63880.1"/>
    <property type="molecule type" value="mRNA"/>
</dbReference>
<dbReference type="CCDS" id="CCDS12860.1">
    <molecule id="Q09FC8-5"/>
</dbReference>
<dbReference type="CCDS" id="CCDS54313.1">
    <molecule id="Q09FC8-6"/>
</dbReference>
<dbReference type="CCDS" id="CCDS82393.1">
    <molecule id="Q09FC8-3"/>
</dbReference>
<dbReference type="RefSeq" id="NP_001129510.2">
    <molecule id="Q09FC8-6"/>
    <property type="nucleotide sequence ID" value="NM_001136038.4"/>
</dbReference>
<dbReference type="RefSeq" id="NP_001157781.1">
    <molecule id="Q09FC8-5"/>
    <property type="nucleotide sequence ID" value="NM_001164309.3"/>
</dbReference>
<dbReference type="RefSeq" id="NP_001317688.1">
    <molecule id="Q09FC8-3"/>
    <property type="nucleotide sequence ID" value="NM_001330759.2"/>
</dbReference>
<dbReference type="RefSeq" id="NP_001317695.1">
    <property type="nucleotide sequence ID" value="NM_001330766.1"/>
</dbReference>
<dbReference type="RefSeq" id="NP_001339067.1">
    <molecule id="Q09FC8-2"/>
    <property type="nucleotide sequence ID" value="NM_001352138.2"/>
</dbReference>
<dbReference type="RefSeq" id="NP_001339068.1">
    <molecule id="Q09FC8-2"/>
    <property type="nucleotide sequence ID" value="NM_001352139.2"/>
</dbReference>
<dbReference type="RefSeq" id="NP_001339069.1">
    <molecule id="Q09FC8-2"/>
    <property type="nucleotide sequence ID" value="NM_001352140.2"/>
</dbReference>
<dbReference type="RefSeq" id="NP_001339070.1">
    <molecule id="Q09FC8-2"/>
    <property type="nucleotide sequence ID" value="NM_001352141.2"/>
</dbReference>
<dbReference type="RefSeq" id="NP_001339071.1">
    <molecule id="Q09FC8-6"/>
    <property type="nucleotide sequence ID" value="NM_001352142.2"/>
</dbReference>
<dbReference type="RefSeq" id="NP_001339072.1">
    <molecule id="Q09FC8-6"/>
    <property type="nucleotide sequence ID" value="NM_001352143.2"/>
</dbReference>
<dbReference type="RefSeq" id="NP_001339073.1">
    <molecule id="Q09FC8-6"/>
    <property type="nucleotide sequence ID" value="NM_001352144.2"/>
</dbReference>
<dbReference type="RefSeq" id="NP_001339075.1">
    <molecule id="Q09FC8-5"/>
    <property type="nucleotide sequence ID" value="NM_001352146.2"/>
</dbReference>
<dbReference type="RefSeq" id="NP_001339076.1">
    <molecule id="Q09FC8-4"/>
    <property type="nucleotide sequence ID" value="NM_001352147.2"/>
</dbReference>
<dbReference type="RefSeq" id="NP_001339077.1">
    <molecule id="Q09FC8-4"/>
    <property type="nucleotide sequence ID" value="NM_001352148.2"/>
</dbReference>
<dbReference type="RefSeq" id="NP_001339078.1">
    <molecule id="Q09FC8-4"/>
    <property type="nucleotide sequence ID" value="NM_001352149.2"/>
</dbReference>
<dbReference type="RefSeq" id="NP_001339079.1">
    <molecule id="Q09FC8-3"/>
    <property type="nucleotide sequence ID" value="NM_001352150.2"/>
</dbReference>
<dbReference type="RefSeq" id="NP_001339080.1">
    <molecule id="Q09FC8-3"/>
    <property type="nucleotide sequence ID" value="NM_001352151.2"/>
</dbReference>
<dbReference type="RefSeq" id="NP_060825.2">
    <molecule id="Q09FC8-5"/>
    <property type="nucleotide sequence ID" value="NM_018355.3"/>
</dbReference>
<dbReference type="RefSeq" id="XP_006723335.1">
    <property type="nucleotide sequence ID" value="XM_006723272.2"/>
</dbReference>
<dbReference type="RefSeq" id="XP_006723336.1">
    <property type="nucleotide sequence ID" value="XM_006723273.2"/>
</dbReference>
<dbReference type="RefSeq" id="XP_006723337.1">
    <property type="nucleotide sequence ID" value="XM_006723274.2"/>
</dbReference>
<dbReference type="RefSeq" id="XP_006723340.1">
    <property type="nucleotide sequence ID" value="XM_006723277.2"/>
</dbReference>
<dbReference type="RefSeq" id="XP_006723342.1">
    <property type="nucleotide sequence ID" value="XM_006723279.1"/>
</dbReference>
<dbReference type="RefSeq" id="XP_006723344.1">
    <property type="nucleotide sequence ID" value="XM_006723281.2"/>
</dbReference>
<dbReference type="RefSeq" id="XP_011525405.1">
    <property type="nucleotide sequence ID" value="XM_011527103.1"/>
</dbReference>
<dbReference type="RefSeq" id="XP_011525406.1">
    <property type="nucleotide sequence ID" value="XM_011527104.1"/>
</dbReference>
<dbReference type="RefSeq" id="XP_016882453.1">
    <molecule id="Q09FC8-5"/>
    <property type="nucleotide sequence ID" value="XM_017026964.2"/>
</dbReference>
<dbReference type="RefSeq" id="XP_016882454.1">
    <property type="nucleotide sequence ID" value="XM_017026965.1"/>
</dbReference>
<dbReference type="RefSeq" id="XP_016882455.1">
    <property type="nucleotide sequence ID" value="XM_017026966.1"/>
</dbReference>
<dbReference type="RefSeq" id="XP_016882456.1">
    <property type="nucleotide sequence ID" value="XM_017026967.1"/>
</dbReference>
<dbReference type="RefSeq" id="XP_016882457.1">
    <property type="nucleotide sequence ID" value="XM_017026968.1"/>
</dbReference>
<dbReference type="RefSeq" id="XP_016882459.1">
    <property type="nucleotide sequence ID" value="XM_017026970.1"/>
</dbReference>
<dbReference type="RefSeq" id="XP_016882461.1">
    <property type="nucleotide sequence ID" value="XM_017026972.1"/>
</dbReference>
<dbReference type="RefSeq" id="XP_016882462.1">
    <property type="nucleotide sequence ID" value="XM_017026973.1"/>
</dbReference>
<dbReference type="RefSeq" id="XP_047295044.1">
    <molecule id="Q09FC8-2"/>
    <property type="nucleotide sequence ID" value="XM_047439088.1"/>
</dbReference>
<dbReference type="RefSeq" id="XP_047295045.1">
    <molecule id="Q09FC8-4"/>
    <property type="nucleotide sequence ID" value="XM_047439089.1"/>
</dbReference>
<dbReference type="SMR" id="Q09FC8"/>
<dbReference type="BioGRID" id="120900">
    <property type="interactions" value="8"/>
</dbReference>
<dbReference type="FunCoup" id="Q09FC8">
    <property type="interactions" value="2"/>
</dbReference>
<dbReference type="IntAct" id="Q09FC8">
    <property type="interactions" value="4"/>
</dbReference>
<dbReference type="STRING" id="9606.ENSP00000439435"/>
<dbReference type="iPTMnet" id="Q09FC8"/>
<dbReference type="PhosphoSitePlus" id="Q09FC8"/>
<dbReference type="BioMuta" id="ZNF415"/>
<dbReference type="DMDM" id="147742905"/>
<dbReference type="jPOST" id="Q09FC8"/>
<dbReference type="MassIVE" id="Q09FC8"/>
<dbReference type="PaxDb" id="9606-ENSP00000439435"/>
<dbReference type="PeptideAtlas" id="Q09FC8"/>
<dbReference type="ProteomicsDB" id="25895"/>
<dbReference type="ProteomicsDB" id="58725">
    <molecule id="Q09FC8-1"/>
</dbReference>
<dbReference type="ProteomicsDB" id="58726">
    <molecule id="Q09FC8-2"/>
</dbReference>
<dbReference type="ProteomicsDB" id="58727">
    <molecule id="Q09FC8-3"/>
</dbReference>
<dbReference type="ProteomicsDB" id="58728">
    <molecule id="Q09FC8-4"/>
</dbReference>
<dbReference type="ProteomicsDB" id="58729">
    <molecule id="Q09FC8-5"/>
</dbReference>
<dbReference type="Antibodypedia" id="820">
    <property type="antibodies" value="137 antibodies from 20 providers"/>
</dbReference>
<dbReference type="DNASU" id="55786"/>
<dbReference type="Ensembl" id="ENST00000243643.9">
    <molecule id="Q09FC8-5"/>
    <property type="protein sequence ID" value="ENSP00000243643.3"/>
    <property type="gene ID" value="ENSG00000170954.12"/>
</dbReference>
<dbReference type="Ensembl" id="ENST00000421033.5">
    <molecule id="Q09FC8-5"/>
    <property type="protein sequence ID" value="ENSP00000395055.2"/>
    <property type="gene ID" value="ENSG00000170954.12"/>
</dbReference>
<dbReference type="Ensembl" id="ENST00000500065.8">
    <molecule id="Q09FC8-6"/>
    <property type="protein sequence ID" value="ENSP00000439435.1"/>
    <property type="gene ID" value="ENSG00000170954.12"/>
</dbReference>
<dbReference type="Ensembl" id="ENST00000601493.5">
    <molecule id="Q09FC8-3"/>
    <property type="protein sequence ID" value="ENSP00000472911.1"/>
    <property type="gene ID" value="ENSG00000170954.12"/>
</dbReference>
<dbReference type="GeneID" id="55786"/>
<dbReference type="KEGG" id="hsa:55786"/>
<dbReference type="MANE-Select" id="ENST00000243643.9">
    <molecule id="Q09FC8-5"/>
    <property type="protein sequence ID" value="ENSP00000243643.3"/>
    <property type="RefSeq nucleotide sequence ID" value="NM_018355.4"/>
    <property type="RefSeq protein sequence ID" value="NP_060825.2"/>
</dbReference>
<dbReference type="UCSC" id="uc002qaw.4">
    <molecule id="Q09FC8-1"/>
    <property type="organism name" value="human"/>
</dbReference>
<dbReference type="AGR" id="HGNC:20636"/>
<dbReference type="CTD" id="55786"/>
<dbReference type="DisGeNET" id="55786"/>
<dbReference type="GeneCards" id="ZNF415"/>
<dbReference type="HGNC" id="HGNC:20636">
    <property type="gene designation" value="ZNF415"/>
</dbReference>
<dbReference type="HPA" id="ENSG00000170954">
    <property type="expression patterns" value="Low tissue specificity"/>
</dbReference>
<dbReference type="MIM" id="619506">
    <property type="type" value="gene"/>
</dbReference>
<dbReference type="neXtProt" id="NX_Q09FC8"/>
<dbReference type="OpenTargets" id="ENSG00000170954"/>
<dbReference type="PharmGKB" id="PA134984602"/>
<dbReference type="VEuPathDB" id="HostDB:ENSG00000170954"/>
<dbReference type="eggNOG" id="KOG1721">
    <property type="taxonomic scope" value="Eukaryota"/>
</dbReference>
<dbReference type="GeneTree" id="ENSGT00940000164638"/>
<dbReference type="HOGENOM" id="CLU_002678_44_0_1"/>
<dbReference type="InParanoid" id="Q09FC8"/>
<dbReference type="OMA" id="EDYIFRA"/>
<dbReference type="OrthoDB" id="9411774at2759"/>
<dbReference type="PAN-GO" id="Q09FC8">
    <property type="GO annotations" value="4 GO annotations based on evolutionary models"/>
</dbReference>
<dbReference type="PhylomeDB" id="Q09FC8"/>
<dbReference type="TreeFam" id="TF341892"/>
<dbReference type="PathwayCommons" id="Q09FC8"/>
<dbReference type="Reactome" id="R-HSA-212436">
    <property type="pathway name" value="Generic Transcription Pathway"/>
</dbReference>
<dbReference type="SignaLink" id="Q09FC8"/>
<dbReference type="BioGRID-ORCS" id="55786">
    <property type="hits" value="12 hits in 1170 CRISPR screens"/>
</dbReference>
<dbReference type="ChiTaRS" id="ZNF415">
    <property type="organism name" value="human"/>
</dbReference>
<dbReference type="GenomeRNAi" id="55786"/>
<dbReference type="Pharos" id="Q09FC8">
    <property type="development level" value="Tdark"/>
</dbReference>
<dbReference type="PRO" id="PR:Q09FC8"/>
<dbReference type="Proteomes" id="UP000005640">
    <property type="component" value="Chromosome 19"/>
</dbReference>
<dbReference type="RNAct" id="Q09FC8">
    <property type="molecule type" value="protein"/>
</dbReference>
<dbReference type="Bgee" id="ENSG00000170954">
    <property type="expression patterns" value="Expressed in sperm and 177 other cell types or tissues"/>
</dbReference>
<dbReference type="ExpressionAtlas" id="Q09FC8">
    <property type="expression patterns" value="baseline and differential"/>
</dbReference>
<dbReference type="GO" id="GO:0005737">
    <property type="term" value="C:cytoplasm"/>
    <property type="evidence" value="ECO:0007669"/>
    <property type="project" value="UniProtKB-SubCell"/>
</dbReference>
<dbReference type="GO" id="GO:0001650">
    <property type="term" value="C:fibrillar center"/>
    <property type="evidence" value="ECO:0000314"/>
    <property type="project" value="HPA"/>
</dbReference>
<dbReference type="GO" id="GO:0015630">
    <property type="term" value="C:microtubule cytoskeleton"/>
    <property type="evidence" value="ECO:0000314"/>
    <property type="project" value="HPA"/>
</dbReference>
<dbReference type="GO" id="GO:0005634">
    <property type="term" value="C:nucleus"/>
    <property type="evidence" value="ECO:0000318"/>
    <property type="project" value="GO_Central"/>
</dbReference>
<dbReference type="GO" id="GO:0000981">
    <property type="term" value="F:DNA-binding transcription factor activity, RNA polymerase II-specific"/>
    <property type="evidence" value="ECO:0000318"/>
    <property type="project" value="GO_Central"/>
</dbReference>
<dbReference type="GO" id="GO:0000978">
    <property type="term" value="F:RNA polymerase II cis-regulatory region sequence-specific DNA binding"/>
    <property type="evidence" value="ECO:0000318"/>
    <property type="project" value="GO_Central"/>
</dbReference>
<dbReference type="GO" id="GO:0008270">
    <property type="term" value="F:zinc ion binding"/>
    <property type="evidence" value="ECO:0007669"/>
    <property type="project" value="UniProtKB-KW"/>
</dbReference>
<dbReference type="GO" id="GO:0006357">
    <property type="term" value="P:regulation of transcription by RNA polymerase II"/>
    <property type="evidence" value="ECO:0000318"/>
    <property type="project" value="GO_Central"/>
</dbReference>
<dbReference type="FunFam" id="3.30.160.60:FF:003908">
    <property type="match status" value="1"/>
</dbReference>
<dbReference type="FunFam" id="3.30.160.60:FF:004137">
    <property type="match status" value="2"/>
</dbReference>
<dbReference type="FunFam" id="3.30.160.60:FF:000029">
    <property type="entry name" value="GLI family zinc finger 4"/>
    <property type="match status" value="1"/>
</dbReference>
<dbReference type="FunFam" id="3.30.160.60:FF:000358">
    <property type="entry name" value="zinc finger protein 24"/>
    <property type="match status" value="1"/>
</dbReference>
<dbReference type="FunFam" id="3.30.160.60:FF:002278">
    <property type="entry name" value="Zinc finger protein 320"/>
    <property type="match status" value="1"/>
</dbReference>
<dbReference type="FunFam" id="3.30.160.60:FF:002343">
    <property type="entry name" value="Zinc finger protein 33A"/>
    <property type="match status" value="1"/>
</dbReference>
<dbReference type="FunFam" id="3.30.160.60:FF:002402">
    <property type="entry name" value="Zinc finger protein 347"/>
    <property type="match status" value="1"/>
</dbReference>
<dbReference type="FunFam" id="3.30.160.60:FF:002090">
    <property type="entry name" value="Zinc finger protein 473"/>
    <property type="match status" value="2"/>
</dbReference>
<dbReference type="FunFam" id="3.30.160.60:FF:002254">
    <property type="entry name" value="Zinc finger protein 540"/>
    <property type="match status" value="1"/>
</dbReference>
<dbReference type="FunFam" id="3.30.160.60:FF:002134">
    <property type="entry name" value="Zinc finger protein 616"/>
    <property type="match status" value="1"/>
</dbReference>
<dbReference type="FunFam" id="3.30.160.60:FF:000394">
    <property type="entry name" value="Zinc finger protein 836"/>
    <property type="match status" value="1"/>
</dbReference>
<dbReference type="FunFam" id="3.30.160.60:FF:002112">
    <property type="entry name" value="ZNF415 isoform 2"/>
    <property type="match status" value="1"/>
</dbReference>
<dbReference type="Gene3D" id="3.30.160.60">
    <property type="entry name" value="Classic Zinc Finger"/>
    <property type="match status" value="11"/>
</dbReference>
<dbReference type="InterPro" id="IPR036236">
    <property type="entry name" value="Znf_C2H2_sf"/>
</dbReference>
<dbReference type="InterPro" id="IPR013087">
    <property type="entry name" value="Znf_C2H2_type"/>
</dbReference>
<dbReference type="PANTHER" id="PTHR24394">
    <property type="entry name" value="ZINC FINGER PROTEIN"/>
    <property type="match status" value="1"/>
</dbReference>
<dbReference type="PANTHER" id="PTHR24394:SF48">
    <property type="entry name" value="ZINC FINGER PROTEIN 771"/>
    <property type="match status" value="1"/>
</dbReference>
<dbReference type="Pfam" id="PF00096">
    <property type="entry name" value="zf-C2H2"/>
    <property type="match status" value="11"/>
</dbReference>
<dbReference type="SMART" id="SM00614">
    <property type="entry name" value="ZnF_BED"/>
    <property type="match status" value="2"/>
</dbReference>
<dbReference type="SMART" id="SM00355">
    <property type="entry name" value="ZnF_C2H2"/>
    <property type="match status" value="11"/>
</dbReference>
<dbReference type="SUPFAM" id="SSF57667">
    <property type="entry name" value="beta-beta-alpha zinc fingers"/>
    <property type="match status" value="6"/>
</dbReference>
<dbReference type="PROSITE" id="PS00028">
    <property type="entry name" value="ZINC_FINGER_C2H2_1"/>
    <property type="match status" value="11"/>
</dbReference>
<dbReference type="PROSITE" id="PS50157">
    <property type="entry name" value="ZINC_FINGER_C2H2_2"/>
    <property type="match status" value="11"/>
</dbReference>
<comment type="function">
    <text evidence="4">Involved in transcriptional regulation. Transcriptional activity differed among the various isoforms. All isoforms except isoform 3 seem to suppresses the transcriptional activities of AP-1 and p53/TP53.</text>
</comment>
<comment type="interaction">
    <interactant intactId="EBI-10226171">
        <id>Q09FC8</id>
    </interactant>
    <interactant intactId="EBI-739863">
        <id>Q9BQ66</id>
        <label>KRTAP4-12</label>
    </interactant>
    <organismsDiffer>false</organismsDiffer>
    <experiments>3</experiments>
</comment>
<comment type="interaction">
    <interactant intactId="EBI-10226171">
        <id>Q09FC8</id>
    </interactant>
    <interactant intactId="EBI-742948">
        <id>Q5JR59</id>
        <label>MTUS2</label>
    </interactant>
    <organismsDiffer>false</organismsDiffer>
    <experiments>3</experiments>
</comment>
<comment type="interaction">
    <interactant intactId="EBI-12273744">
        <id>Q09FC8-4</id>
    </interactant>
    <interactant intactId="EBI-3866279">
        <id>Q9BWT7</id>
        <label>CARD10</label>
    </interactant>
    <organismsDiffer>false</organismsDiffer>
    <experiments>3</experiments>
</comment>
<comment type="subcellular location">
    <subcellularLocation>
        <location evidence="4">Nucleus</location>
    </subcellularLocation>
    <subcellularLocation>
        <location evidence="4">Cytoplasm</location>
    </subcellularLocation>
    <text>Isoforms 1, isoform 2, isoform 4 and isoform 5 showed both nuclear and cytoplasm localization. Isoform 3 localized only to nucleus.</text>
</comment>
<comment type="alternative products">
    <event type="alternative splicing"/>
    <isoform>
        <id>Q09FC8-1</id>
        <name>1</name>
        <name>ZNF415-3</name>
        <sequence type="displayed"/>
    </isoform>
    <isoform>
        <id>Q09FC8-2</id>
        <name>2</name>
        <name>ZNF415-2</name>
        <sequence type="described" ref="VSP_025178"/>
    </isoform>
    <isoform>
        <id>Q09FC8-3</id>
        <name>3</name>
        <name>ZNF415-1</name>
        <sequence type="described" ref="VSP_025175"/>
    </isoform>
    <isoform>
        <id>Q09FC8-4</id>
        <name>4</name>
        <name>ZNF415-4</name>
        <sequence type="described" ref="VSP_025177"/>
    </isoform>
    <isoform>
        <id>Q09FC8-5</id>
        <name>5</name>
        <name>ZNF415-5</name>
        <sequence type="described" ref="VSP_025176"/>
    </isoform>
    <isoform>
        <id>Q09FC8-6</id>
        <name>6</name>
        <sequence type="described" ref="VSP_044807"/>
    </isoform>
</comment>
<comment type="tissue specificity">
    <text evidence="4">Expressed in all tissues examined. Isoforms are differentially expressed. Isoform 3 and isoform 5 were highly expressed, isoform 4 moderately expressed, isoform 2 lower expression, the lowest expression level was seem with isoform 1.</text>
</comment>